<name>DJ1B_DROME</name>
<evidence type="ECO:0000250" key="1">
    <source>
        <dbReference type="UniProtKB" id="Q99497"/>
    </source>
</evidence>
<evidence type="ECO:0000269" key="2">
    <source>
    </source>
</evidence>
<evidence type="ECO:0000269" key="3">
    <source>
    </source>
</evidence>
<evidence type="ECO:0000269" key="4">
    <source>
    </source>
</evidence>
<evidence type="ECO:0000269" key="5">
    <source>
    </source>
</evidence>
<evidence type="ECO:0000269" key="6">
    <source>
    </source>
</evidence>
<evidence type="ECO:0000269" key="7">
    <source>
    </source>
</evidence>
<evidence type="ECO:0000269" key="8">
    <source>
    </source>
</evidence>
<evidence type="ECO:0000269" key="9">
    <source>
    </source>
</evidence>
<evidence type="ECO:0000269" key="10">
    <source>
    </source>
</evidence>
<evidence type="ECO:0000305" key="11"/>
<evidence type="ECO:0000312" key="12">
    <source>
        <dbReference type="EMBL" id="BAB84672.1"/>
    </source>
</evidence>
<evidence type="ECO:0000312" key="13">
    <source>
        <dbReference type="FlyBase" id="FBgn0039802"/>
    </source>
</evidence>
<evidence type="ECO:0007829" key="14">
    <source>
        <dbReference type="PDB" id="4E08"/>
    </source>
</evidence>
<proteinExistence type="evidence at protein level"/>
<gene>
    <name evidence="13" type="primary">dj-1beta</name>
    <name evidence="13" type="synonym">dj-1-beta</name>
    <name evidence="13" type="ORF">CG1349</name>
</gene>
<keyword id="KW-0002">3D-structure</keyword>
<keyword id="KW-0025">Alternative splicing</keyword>
<keyword id="KW-0963">Cytoplasm</keyword>
<keyword id="KW-0496">Mitochondrion</keyword>
<keyword id="KW-0539">Nucleus</keyword>
<keyword id="KW-0558">Oxidation</keyword>
<keyword id="KW-1185">Reference proteome</keyword>
<sequence length="187" mass="19250">MSKSALVILAPGAEEMEFIIAADVLRRAGIKVTVAGLNGGEAVKCSRDVQILPDTSLAQVASDKFDVVVLPGGLGGSNAMGESSLVGDLLRSQESGGGLIAAICAAPTVLAKHGVASGKSLTSYPSMKPQLVNNYSYVDDKTVVKDGNLITSRGPGTAYEFALKIAEELAGKEKVQEVAKGLLVAYN</sequence>
<dbReference type="EMBL" id="AB079599">
    <property type="protein sequence ID" value="BAB84672.1"/>
    <property type="molecule type" value="mRNA"/>
</dbReference>
<dbReference type="EMBL" id="AE014297">
    <property type="protein sequence ID" value="AAF57086.3"/>
    <property type="molecule type" value="Genomic_DNA"/>
</dbReference>
<dbReference type="EMBL" id="AY060670">
    <property type="protein sequence ID" value="AAL28218.1"/>
    <property type="molecule type" value="mRNA"/>
</dbReference>
<dbReference type="RefSeq" id="NP_651825.4">
    <molecule id="Q9VA37-1"/>
    <property type="nucleotide sequence ID" value="NM_143568.3"/>
</dbReference>
<dbReference type="PDB" id="4E08">
    <property type="method" value="X-ray"/>
    <property type="resolution" value="2.00 A"/>
    <property type="chains" value="A/B=1-187"/>
</dbReference>
<dbReference type="PDBsum" id="4E08"/>
<dbReference type="SMR" id="Q9VA37"/>
<dbReference type="FunCoup" id="Q9VA37">
    <property type="interactions" value="1486"/>
</dbReference>
<dbReference type="IntAct" id="Q9VA37">
    <property type="interactions" value="2"/>
</dbReference>
<dbReference type="STRING" id="7227.FBpp0401456"/>
<dbReference type="MEROPS" id="C56.002"/>
<dbReference type="PaxDb" id="7227-FBpp0085065"/>
<dbReference type="DNASU" id="43652"/>
<dbReference type="EnsemblMetazoa" id="FBtr0445215">
    <molecule id="Q9VA37-1"/>
    <property type="protein sequence ID" value="FBpp0401456"/>
    <property type="gene ID" value="FBgn0039802"/>
</dbReference>
<dbReference type="GeneID" id="43652"/>
<dbReference type="KEGG" id="dme:Dmel_CG1349"/>
<dbReference type="UCSC" id="CG1349-RA">
    <molecule id="Q9VA37-1"/>
    <property type="organism name" value="d. melanogaster"/>
</dbReference>
<dbReference type="AGR" id="FB:FBgn0039802"/>
<dbReference type="CTD" id="43652"/>
<dbReference type="FlyBase" id="FBgn0039802">
    <property type="gene designation" value="dj-1beta"/>
</dbReference>
<dbReference type="VEuPathDB" id="VectorBase:FBgn0039802"/>
<dbReference type="eggNOG" id="KOG2764">
    <property type="taxonomic scope" value="Eukaryota"/>
</dbReference>
<dbReference type="GeneTree" id="ENSGT00390000001231"/>
<dbReference type="HOGENOM" id="CLU_000445_44_2_1"/>
<dbReference type="InParanoid" id="Q9VA37"/>
<dbReference type="OMA" id="KATCYPG"/>
<dbReference type="OrthoDB" id="543156at2759"/>
<dbReference type="PhylomeDB" id="Q9VA37"/>
<dbReference type="Reactome" id="R-DME-9646399">
    <property type="pathway name" value="Aggrephagy"/>
</dbReference>
<dbReference type="BioGRID-ORCS" id="43652">
    <property type="hits" value="0 hits in 1 CRISPR screen"/>
</dbReference>
<dbReference type="EvolutionaryTrace" id="Q9VA37"/>
<dbReference type="GenomeRNAi" id="43652"/>
<dbReference type="PRO" id="PR:Q9VA37"/>
<dbReference type="Proteomes" id="UP000000803">
    <property type="component" value="Chromosome 3R"/>
</dbReference>
<dbReference type="Bgee" id="FBgn0039802">
    <property type="expression patterns" value="Expressed in adult middle midgut class II enteroendocrine cell in adult midgut (Drosophila) and 163 other cell types or tissues"/>
</dbReference>
<dbReference type="GO" id="GO:0005737">
    <property type="term" value="C:cytoplasm"/>
    <property type="evidence" value="ECO:0000318"/>
    <property type="project" value="GO_Central"/>
</dbReference>
<dbReference type="GO" id="GO:0005739">
    <property type="term" value="C:mitochondrion"/>
    <property type="evidence" value="ECO:0000314"/>
    <property type="project" value="UniProtKB"/>
</dbReference>
<dbReference type="GO" id="GO:0005634">
    <property type="term" value="C:nucleus"/>
    <property type="evidence" value="ECO:0000318"/>
    <property type="project" value="GO_Central"/>
</dbReference>
<dbReference type="GO" id="GO:0051920">
    <property type="term" value="F:peroxiredoxin activity"/>
    <property type="evidence" value="ECO:0000250"/>
    <property type="project" value="FlyBase"/>
</dbReference>
<dbReference type="GO" id="GO:0036524">
    <property type="term" value="F:protein deglycase activity"/>
    <property type="evidence" value="ECO:0000250"/>
    <property type="project" value="FlyBase"/>
</dbReference>
<dbReference type="GO" id="GO:0008344">
    <property type="term" value="P:adult locomotory behavior"/>
    <property type="evidence" value="ECO:0000315"/>
    <property type="project" value="FlyBase"/>
</dbReference>
<dbReference type="GO" id="GO:0034614">
    <property type="term" value="P:cellular response to reactive oxygen species"/>
    <property type="evidence" value="ECO:0000315"/>
    <property type="project" value="UniProtKB"/>
</dbReference>
<dbReference type="GO" id="GO:0046295">
    <property type="term" value="P:glycolate biosynthetic process"/>
    <property type="evidence" value="ECO:0000318"/>
    <property type="project" value="GO_Central"/>
</dbReference>
<dbReference type="GO" id="GO:1903189">
    <property type="term" value="P:glyoxal metabolic process"/>
    <property type="evidence" value="ECO:0000318"/>
    <property type="project" value="GO_Central"/>
</dbReference>
<dbReference type="GO" id="GO:0008345">
    <property type="term" value="P:larval locomotory behavior"/>
    <property type="evidence" value="ECO:0000315"/>
    <property type="project" value="UniProtKB"/>
</dbReference>
<dbReference type="GO" id="GO:0048640">
    <property type="term" value="P:negative regulation of developmental growth"/>
    <property type="evidence" value="ECO:0000315"/>
    <property type="project" value="FlyBase"/>
</dbReference>
<dbReference type="GO" id="GO:0051898">
    <property type="term" value="P:negative regulation of phosphatidylinositol 3-kinase/protein kinase B signal transduction"/>
    <property type="evidence" value="ECO:0000315"/>
    <property type="project" value="UniProtKB"/>
</dbReference>
<dbReference type="GO" id="GO:0010310">
    <property type="term" value="P:regulation of hydrogen peroxide metabolic process"/>
    <property type="evidence" value="ECO:0000315"/>
    <property type="project" value="FlyBase"/>
</dbReference>
<dbReference type="GO" id="GO:1905446">
    <property type="term" value="P:regulation of mitochondrial ATP synthesis coupled electron transport"/>
    <property type="evidence" value="ECO:0000316"/>
    <property type="project" value="FlyBase"/>
</dbReference>
<dbReference type="GO" id="GO:1900073">
    <property type="term" value="P:regulation of neuromuscular synaptic transmission"/>
    <property type="evidence" value="ECO:0000315"/>
    <property type="project" value="UniProtKB"/>
</dbReference>
<dbReference type="GO" id="GO:0048167">
    <property type="term" value="P:regulation of synaptic plasticity"/>
    <property type="evidence" value="ECO:0000315"/>
    <property type="project" value="UniProtKB"/>
</dbReference>
<dbReference type="GO" id="GO:0006979">
    <property type="term" value="P:response to oxidative stress"/>
    <property type="evidence" value="ECO:0000314"/>
    <property type="project" value="FlyBase"/>
</dbReference>
<dbReference type="CDD" id="cd03135">
    <property type="entry name" value="GATase1_DJ-1"/>
    <property type="match status" value="1"/>
</dbReference>
<dbReference type="FunFam" id="3.40.50.880:FF:000022">
    <property type="entry name" value="protein deglycase DJ-1"/>
    <property type="match status" value="1"/>
</dbReference>
<dbReference type="Gene3D" id="3.40.50.880">
    <property type="match status" value="1"/>
</dbReference>
<dbReference type="InterPro" id="IPR029062">
    <property type="entry name" value="Class_I_gatase-like"/>
</dbReference>
<dbReference type="InterPro" id="IPR006287">
    <property type="entry name" value="DJ-1"/>
</dbReference>
<dbReference type="InterPro" id="IPR002818">
    <property type="entry name" value="DJ-1/PfpI"/>
</dbReference>
<dbReference type="InterPro" id="IPR050325">
    <property type="entry name" value="Prot/Nucl_acid_deglycase"/>
</dbReference>
<dbReference type="NCBIfam" id="TIGR01383">
    <property type="entry name" value="not_thiJ"/>
    <property type="match status" value="1"/>
</dbReference>
<dbReference type="PANTHER" id="PTHR48094:SF12">
    <property type="entry name" value="PARKINSON DISEASE PROTEIN 7 HOMOLOG"/>
    <property type="match status" value="1"/>
</dbReference>
<dbReference type="PANTHER" id="PTHR48094">
    <property type="entry name" value="PROTEIN/NUCLEIC ACID DEGLYCASE DJ-1-RELATED"/>
    <property type="match status" value="1"/>
</dbReference>
<dbReference type="Pfam" id="PF01965">
    <property type="entry name" value="DJ-1_PfpI"/>
    <property type="match status" value="1"/>
</dbReference>
<dbReference type="SUPFAM" id="SSF52317">
    <property type="entry name" value="Class I glutamine amidotransferase-like"/>
    <property type="match status" value="1"/>
</dbReference>
<accession>Q9VA37</accession>
<accession>Q7KXK5</accession>
<accession>Q95SP6</accession>
<reference key="1">
    <citation type="journal article" date="2006" name="Cell Death Differ.">
        <title>Proper SUMO-1 conjugation is essential to DJ-1 to exert its full activities.</title>
        <authorList>
            <person name="Shinbo Y."/>
            <person name="Niki T."/>
            <person name="Taira T."/>
            <person name="Ooe H."/>
            <person name="Takahashi-Niki K."/>
            <person name="Maita C."/>
            <person name="Seino C."/>
            <person name="Iguchi-Ariga S.M.M."/>
            <person name="Ariga H."/>
        </authorList>
    </citation>
    <scope>NUCLEOTIDE SEQUENCE [MRNA] (ISOFORM 2)</scope>
    <source>
        <tissue evidence="12">Head</tissue>
    </source>
</reference>
<reference key="2">
    <citation type="journal article" date="2000" name="Science">
        <title>The genome sequence of Drosophila melanogaster.</title>
        <authorList>
            <person name="Adams M.D."/>
            <person name="Celniker S.E."/>
            <person name="Holt R.A."/>
            <person name="Evans C.A."/>
            <person name="Gocayne J.D."/>
            <person name="Amanatides P.G."/>
            <person name="Scherer S.E."/>
            <person name="Li P.W."/>
            <person name="Hoskins R.A."/>
            <person name="Galle R.F."/>
            <person name="George R.A."/>
            <person name="Lewis S.E."/>
            <person name="Richards S."/>
            <person name="Ashburner M."/>
            <person name="Henderson S.N."/>
            <person name="Sutton G.G."/>
            <person name="Wortman J.R."/>
            <person name="Yandell M.D."/>
            <person name="Zhang Q."/>
            <person name="Chen L.X."/>
            <person name="Brandon R.C."/>
            <person name="Rogers Y.-H.C."/>
            <person name="Blazej R.G."/>
            <person name="Champe M."/>
            <person name="Pfeiffer B.D."/>
            <person name="Wan K.H."/>
            <person name="Doyle C."/>
            <person name="Baxter E.G."/>
            <person name="Helt G."/>
            <person name="Nelson C.R."/>
            <person name="Miklos G.L.G."/>
            <person name="Abril J.F."/>
            <person name="Agbayani A."/>
            <person name="An H.-J."/>
            <person name="Andrews-Pfannkoch C."/>
            <person name="Baldwin D."/>
            <person name="Ballew R.M."/>
            <person name="Basu A."/>
            <person name="Baxendale J."/>
            <person name="Bayraktaroglu L."/>
            <person name="Beasley E.M."/>
            <person name="Beeson K.Y."/>
            <person name="Benos P.V."/>
            <person name="Berman B.P."/>
            <person name="Bhandari D."/>
            <person name="Bolshakov S."/>
            <person name="Borkova D."/>
            <person name="Botchan M.R."/>
            <person name="Bouck J."/>
            <person name="Brokstein P."/>
            <person name="Brottier P."/>
            <person name="Burtis K.C."/>
            <person name="Busam D.A."/>
            <person name="Butler H."/>
            <person name="Cadieu E."/>
            <person name="Center A."/>
            <person name="Chandra I."/>
            <person name="Cherry J.M."/>
            <person name="Cawley S."/>
            <person name="Dahlke C."/>
            <person name="Davenport L.B."/>
            <person name="Davies P."/>
            <person name="de Pablos B."/>
            <person name="Delcher A."/>
            <person name="Deng Z."/>
            <person name="Mays A.D."/>
            <person name="Dew I."/>
            <person name="Dietz S.M."/>
            <person name="Dodson K."/>
            <person name="Doup L.E."/>
            <person name="Downes M."/>
            <person name="Dugan-Rocha S."/>
            <person name="Dunkov B.C."/>
            <person name="Dunn P."/>
            <person name="Durbin K.J."/>
            <person name="Evangelista C.C."/>
            <person name="Ferraz C."/>
            <person name="Ferriera S."/>
            <person name="Fleischmann W."/>
            <person name="Fosler C."/>
            <person name="Gabrielian A.E."/>
            <person name="Garg N.S."/>
            <person name="Gelbart W.M."/>
            <person name="Glasser K."/>
            <person name="Glodek A."/>
            <person name="Gong F."/>
            <person name="Gorrell J.H."/>
            <person name="Gu Z."/>
            <person name="Guan P."/>
            <person name="Harris M."/>
            <person name="Harris N.L."/>
            <person name="Harvey D.A."/>
            <person name="Heiman T.J."/>
            <person name="Hernandez J.R."/>
            <person name="Houck J."/>
            <person name="Hostin D."/>
            <person name="Houston K.A."/>
            <person name="Howland T.J."/>
            <person name="Wei M.-H."/>
            <person name="Ibegwam C."/>
            <person name="Jalali M."/>
            <person name="Kalush F."/>
            <person name="Karpen G.H."/>
            <person name="Ke Z."/>
            <person name="Kennison J.A."/>
            <person name="Ketchum K.A."/>
            <person name="Kimmel B.E."/>
            <person name="Kodira C.D."/>
            <person name="Kraft C.L."/>
            <person name="Kravitz S."/>
            <person name="Kulp D."/>
            <person name="Lai Z."/>
            <person name="Lasko P."/>
            <person name="Lei Y."/>
            <person name="Levitsky A.A."/>
            <person name="Li J.H."/>
            <person name="Li Z."/>
            <person name="Liang Y."/>
            <person name="Lin X."/>
            <person name="Liu X."/>
            <person name="Mattei B."/>
            <person name="McIntosh T.C."/>
            <person name="McLeod M.P."/>
            <person name="McPherson D."/>
            <person name="Merkulov G."/>
            <person name="Milshina N.V."/>
            <person name="Mobarry C."/>
            <person name="Morris J."/>
            <person name="Moshrefi A."/>
            <person name="Mount S.M."/>
            <person name="Moy M."/>
            <person name="Murphy B."/>
            <person name="Murphy L."/>
            <person name="Muzny D.M."/>
            <person name="Nelson D.L."/>
            <person name="Nelson D.R."/>
            <person name="Nelson K.A."/>
            <person name="Nixon K."/>
            <person name="Nusskern D.R."/>
            <person name="Pacleb J.M."/>
            <person name="Palazzolo M."/>
            <person name="Pittman G.S."/>
            <person name="Pan S."/>
            <person name="Pollard J."/>
            <person name="Puri V."/>
            <person name="Reese M.G."/>
            <person name="Reinert K."/>
            <person name="Remington K."/>
            <person name="Saunders R.D.C."/>
            <person name="Scheeler F."/>
            <person name="Shen H."/>
            <person name="Shue B.C."/>
            <person name="Siden-Kiamos I."/>
            <person name="Simpson M."/>
            <person name="Skupski M.P."/>
            <person name="Smith T.J."/>
            <person name="Spier E."/>
            <person name="Spradling A.C."/>
            <person name="Stapleton M."/>
            <person name="Strong R."/>
            <person name="Sun E."/>
            <person name="Svirskas R."/>
            <person name="Tector C."/>
            <person name="Turner R."/>
            <person name="Venter E."/>
            <person name="Wang A.H."/>
            <person name="Wang X."/>
            <person name="Wang Z.-Y."/>
            <person name="Wassarman D.A."/>
            <person name="Weinstock G.M."/>
            <person name="Weissenbach J."/>
            <person name="Williams S.M."/>
            <person name="Woodage T."/>
            <person name="Worley K.C."/>
            <person name="Wu D."/>
            <person name="Yang S."/>
            <person name="Yao Q.A."/>
            <person name="Ye J."/>
            <person name="Yeh R.-F."/>
            <person name="Zaveri J.S."/>
            <person name="Zhan M."/>
            <person name="Zhang G."/>
            <person name="Zhao Q."/>
            <person name="Zheng L."/>
            <person name="Zheng X.H."/>
            <person name="Zhong F.N."/>
            <person name="Zhong W."/>
            <person name="Zhou X."/>
            <person name="Zhu S.C."/>
            <person name="Zhu X."/>
            <person name="Smith H.O."/>
            <person name="Gibbs R.A."/>
            <person name="Myers E.W."/>
            <person name="Rubin G.M."/>
            <person name="Venter J.C."/>
        </authorList>
    </citation>
    <scope>NUCLEOTIDE SEQUENCE [LARGE SCALE GENOMIC DNA]</scope>
    <source>
        <strain>Berkeley</strain>
    </source>
</reference>
<reference key="3">
    <citation type="journal article" date="2002" name="Genome Biol.">
        <title>Annotation of the Drosophila melanogaster euchromatic genome: a systematic review.</title>
        <authorList>
            <person name="Misra S."/>
            <person name="Crosby M.A."/>
            <person name="Mungall C.J."/>
            <person name="Matthews B.B."/>
            <person name="Campbell K.S."/>
            <person name="Hradecky P."/>
            <person name="Huang Y."/>
            <person name="Kaminker J.S."/>
            <person name="Millburn G.H."/>
            <person name="Prochnik S.E."/>
            <person name="Smith C.D."/>
            <person name="Tupy J.L."/>
            <person name="Whitfield E.J."/>
            <person name="Bayraktaroglu L."/>
            <person name="Berman B.P."/>
            <person name="Bettencourt B.R."/>
            <person name="Celniker S.E."/>
            <person name="de Grey A.D.N.J."/>
            <person name="Drysdale R.A."/>
            <person name="Harris N.L."/>
            <person name="Richter J."/>
            <person name="Russo S."/>
            <person name="Schroeder A.J."/>
            <person name="Shu S.Q."/>
            <person name="Stapleton M."/>
            <person name="Yamada C."/>
            <person name="Ashburner M."/>
            <person name="Gelbart W.M."/>
            <person name="Rubin G.M."/>
            <person name="Lewis S.E."/>
        </authorList>
    </citation>
    <scope>GENOME REANNOTATION</scope>
    <source>
        <strain>Berkeley</strain>
    </source>
</reference>
<reference key="4">
    <citation type="journal article" date="2002" name="Genome Biol.">
        <title>A Drosophila full-length cDNA resource.</title>
        <authorList>
            <person name="Stapleton M."/>
            <person name="Carlson J.W."/>
            <person name="Brokstein P."/>
            <person name="Yu C."/>
            <person name="Champe M."/>
            <person name="George R.A."/>
            <person name="Guarin H."/>
            <person name="Kronmiller B."/>
            <person name="Pacleb J.M."/>
            <person name="Park S."/>
            <person name="Wan K.H."/>
            <person name="Rubin G.M."/>
            <person name="Celniker S.E."/>
        </authorList>
    </citation>
    <scope>NUCLEOTIDE SEQUENCE [LARGE SCALE MRNA] (ISOFORM 2)</scope>
    <source>
        <strain>Berkeley</strain>
    </source>
</reference>
<reference key="5">
    <citation type="journal article" date="2005" name="Curr. Biol.">
        <title>Drosophila DJ-1 mutants are selectively sensitive to environmental toxins associated with Parkinson's disease.</title>
        <authorList>
            <person name="Meulener M."/>
            <person name="Whitworth A.J."/>
            <person name="Armstrong-Gold C.E."/>
            <person name="Rizzu P."/>
            <person name="Heutink P."/>
            <person name="Wes P.D."/>
            <person name="Pallanck L.J."/>
            <person name="Bonini N.M."/>
        </authorList>
    </citation>
    <scope>TISSUE SPECIFICITY</scope>
    <scope>DEVELOPMENTAL STAGE</scope>
    <scope>DISRUPTION PHENOTYPE</scope>
</reference>
<reference key="6">
    <citation type="journal article" date="2005" name="Curr. Biol.">
        <title>Roles of Drosophila DJ-1 in survival of dopaminergic neurons and oxidative stress.</title>
        <authorList>
            <person name="Menzies F.M."/>
            <person name="Yenisetti S.C."/>
            <person name="Min K.T."/>
        </authorList>
    </citation>
    <scope>TISSUE SPECIFICITY</scope>
    <scope>DEVELOPMENTAL STAGE</scope>
    <scope>DISRUPTION PHENOTYPE</scope>
</reference>
<reference key="7">
    <citation type="journal article" date="2005" name="Gene">
        <title>Drosophila DJ-1 mutants show oxidative stress-sensitive locomotive dysfunction.</title>
        <authorList>
            <person name="Park J."/>
            <person name="Kim S.Y."/>
            <person name="Cha G.H."/>
            <person name="Lee S.B."/>
            <person name="Kim S."/>
            <person name="Chung J."/>
        </authorList>
    </citation>
    <scope>FUNCTION</scope>
    <scope>SUBCELLULAR LOCATION</scope>
    <scope>DEVELOPMENTAL STAGE</scope>
    <scope>DISRUPTION PHENOTYPE</scope>
</reference>
<reference key="8">
    <citation type="journal article" date="2006" name="Proc. Natl. Acad. Sci. U.S.A.">
        <title>Mutational analysis of DJ-1 in Drosophila implicates functional inactivation by oxidative damage and aging.</title>
        <authorList>
            <person name="Meulener M.C."/>
            <person name="Xu K."/>
            <person name="Thomson L."/>
            <person name="Thompson L."/>
            <person name="Ischiropoulos H."/>
            <person name="Bonini N.M."/>
        </authorList>
    </citation>
    <scope>FUNCTION</scope>
    <scope>OXIDATION AT CYS-45 AND CYS-104</scope>
    <scope>MUTAGENESIS OF CYS-45 AND CYS-104</scope>
</reference>
<reference key="9">
    <citation type="journal article" date="2010" name="Proc. Natl. Acad. Sci. U.S.A.">
        <title>DJ-1 is critical for mitochondrial function and rescues PINK1 loss of function.</title>
        <authorList>
            <person name="Hao L.Y."/>
            <person name="Giasson B.I."/>
            <person name="Bonini N.M."/>
        </authorList>
    </citation>
    <scope>FUNCTION</scope>
    <scope>DISRUPTION PHENOTYPE</scope>
</reference>
<reference key="10">
    <citation type="journal article" date="2013" name="PLoS Genet.">
        <title>Drosophila DJ-1 decreases neural sensitivity to stress by negatively regulating Daxx-like protein through dFOXO.</title>
        <authorList>
            <person name="Hwang S."/>
            <person name="Song S."/>
            <person name="Hong Y.K."/>
            <person name="Choi G."/>
            <person name="Suh Y.S."/>
            <person name="Han S.Y."/>
            <person name="Lee M."/>
            <person name="Park S.H."/>
            <person name="Lee J.H."/>
            <person name="Lee S."/>
            <person name="Bang S.M."/>
            <person name="Jeong Y."/>
            <person name="Chung W.J."/>
            <person name="Lee I.S."/>
            <person name="Jeong G."/>
            <person name="Chung J."/>
            <person name="Cho K.S."/>
        </authorList>
    </citation>
    <scope>FUNCTION</scope>
    <scope>DISRUPTION PHENOTYPE</scope>
</reference>
<reference key="11">
    <citation type="journal article" date="2017" name="J. Biol. Chem.">
        <title>Evidence against a role for the Parkinsonism-associated protein DJ-1 in methylglyoxal detoxification.</title>
        <authorList>
            <person name="Pfaff D.H."/>
            <person name="Fleming T."/>
            <person name="Nawroth P."/>
            <person name="Teleman A.A."/>
        </authorList>
    </citation>
    <scope>FUNCTION</scope>
    <scope>DISRUPTION PHENOTYPE</scope>
</reference>
<reference key="12">
    <citation type="journal article" date="2018" name="Elife">
        <title>Reactive oxygen species regulate activity-dependent neuronal plasticity in Drosophila.</title>
        <authorList>
            <person name="Oswald M.C."/>
            <person name="Brooks P.S."/>
            <person name="Zwart M.F."/>
            <person name="Mukherjee A."/>
            <person name="West R.J."/>
            <person name="Giachello C.N."/>
            <person name="Morarach K."/>
            <person name="Baines R.A."/>
            <person name="Sweeney S.T."/>
            <person name="Landgraf M."/>
        </authorList>
    </citation>
    <scope>FUNCTION</scope>
    <scope>DISRUPTION PHENOTYPE</scope>
</reference>
<reference key="13">
    <citation type="journal article" date="2012" name="Biochemistry">
        <title>Conservation of oxidative protein stabilization in an insect homologue of parkinsonism-associated protein DJ-1.</title>
        <authorList>
            <person name="Lin J."/>
            <person name="Prahlad J."/>
            <person name="Wilson M.A."/>
        </authorList>
    </citation>
    <scope>X-RAY CRYSTALLOGRAPHY (2.00 ANGSTROMS) OF 19-205</scope>
    <scope>OXIDATION AT CYS-104</scope>
</reference>
<organism>
    <name type="scientific">Drosophila melanogaster</name>
    <name type="common">Fruit fly</name>
    <dbReference type="NCBI Taxonomy" id="7227"/>
    <lineage>
        <taxon>Eukaryota</taxon>
        <taxon>Metazoa</taxon>
        <taxon>Ecdysozoa</taxon>
        <taxon>Arthropoda</taxon>
        <taxon>Hexapoda</taxon>
        <taxon>Insecta</taxon>
        <taxon>Pterygota</taxon>
        <taxon>Neoptera</taxon>
        <taxon>Endopterygota</taxon>
        <taxon>Diptera</taxon>
        <taxon>Brachycera</taxon>
        <taxon>Muscomorpha</taxon>
        <taxon>Ephydroidea</taxon>
        <taxon>Drosophilidae</taxon>
        <taxon>Drosophila</taxon>
        <taxon>Sophophora</taxon>
    </lineage>
</organism>
<protein>
    <recommendedName>
        <fullName evidence="11">Protein dj-1beta</fullName>
    </recommendedName>
</protein>
<feature type="chain" id="PRO_0000439172" description="Protein dj-1beta">
    <location>
        <begin position="1"/>
        <end position="187"/>
    </location>
</feature>
<feature type="active site" description="Nucleophile" evidence="1">
    <location>
        <position position="104"/>
    </location>
</feature>
<feature type="modified residue" description="Cysteine sulfinic acid (-SO2H)" evidence="5">
    <location>
        <position position="45"/>
    </location>
</feature>
<feature type="modified residue" description="Cysteine sulfinic acid (-SO2H); alternate" evidence="5 7">
    <location>
        <position position="104"/>
    </location>
</feature>
<feature type="splice variant" id="VSP_058800" description="In isoform 2.">
    <original>M</original>
    <variation>MVFFGFPQISRHFSKFTKM</variation>
    <location>
        <position position="1"/>
    </location>
</feature>
<feature type="mutagenesis site" description="Lack of oxidation modification." evidence="5">
    <original>C</original>
    <variation>A</variation>
    <variation>D</variation>
    <location>
        <position position="45"/>
    </location>
</feature>
<feature type="mutagenesis site" description="Lack of oxidation modification; results in increased sensitivity to oxidative stress." evidence="5">
    <original>C</original>
    <variation>A</variation>
    <variation>D</variation>
    <location>
        <position position="104"/>
    </location>
</feature>
<feature type="strand" evidence="14">
    <location>
        <begin position="4"/>
        <end position="9"/>
    </location>
</feature>
<feature type="helix" evidence="14">
    <location>
        <begin position="15"/>
        <end position="27"/>
    </location>
</feature>
<feature type="strand" evidence="14">
    <location>
        <begin position="31"/>
        <end position="41"/>
    </location>
</feature>
<feature type="strand" evidence="14">
    <location>
        <begin position="50"/>
        <end position="52"/>
    </location>
</feature>
<feature type="strand" evidence="14">
    <location>
        <begin position="54"/>
        <end position="56"/>
    </location>
</feature>
<feature type="helix" evidence="14">
    <location>
        <begin position="58"/>
        <end position="60"/>
    </location>
</feature>
<feature type="strand" evidence="14">
    <location>
        <begin position="66"/>
        <end position="70"/>
    </location>
</feature>
<feature type="helix" evidence="14">
    <location>
        <begin position="74"/>
        <end position="82"/>
    </location>
</feature>
<feature type="helix" evidence="14">
    <location>
        <begin position="84"/>
        <end position="95"/>
    </location>
</feature>
<feature type="strand" evidence="14">
    <location>
        <begin position="99"/>
        <end position="103"/>
    </location>
</feature>
<feature type="turn" evidence="14">
    <location>
        <begin position="104"/>
        <end position="106"/>
    </location>
</feature>
<feature type="helix" evidence="14">
    <location>
        <begin position="107"/>
        <end position="112"/>
    </location>
</feature>
<feature type="helix" evidence="14">
    <location>
        <begin position="125"/>
        <end position="130"/>
    </location>
</feature>
<feature type="strand" evidence="14">
    <location>
        <begin position="131"/>
        <end position="137"/>
    </location>
</feature>
<feature type="strand" evidence="14">
    <location>
        <begin position="142"/>
        <end position="146"/>
    </location>
</feature>
<feature type="strand" evidence="14">
    <location>
        <begin position="149"/>
        <end position="152"/>
    </location>
</feature>
<feature type="helix" evidence="14">
    <location>
        <begin position="155"/>
        <end position="157"/>
    </location>
</feature>
<feature type="helix" evidence="14">
    <location>
        <begin position="158"/>
        <end position="170"/>
    </location>
</feature>
<feature type="helix" evidence="14">
    <location>
        <begin position="172"/>
        <end position="182"/>
    </location>
</feature>
<comment type="function">
    <text evidence="3 4 5 6 9 10">Plays an important role in cell protection against oxidative stress and cell death by acting as a oxidative stress sensor (PubMed:16139214, PubMed:16203113, PubMed:16894167, PubMed:20457924). Does not play a role in methylglyoxal detoxification (PubMed:27903648). Plays a role in mitochondrial function together with Pink1 (PubMed:20457924). In motor neurons regulates structural synaptic plasticity of locomotor behavior as part of the PTEN-phosphatidylinositol 3-kinase pathway in response to oxygen species (ROS) levels (PubMed:30540251).</text>
</comment>
<comment type="subcellular location">
    <subcellularLocation>
        <location evidence="4">Mitochondrion</location>
    </subcellularLocation>
    <subcellularLocation>
        <location evidence="4">Cytoplasm</location>
    </subcellularLocation>
    <subcellularLocation>
        <location evidence="4">Nucleus</location>
    </subcellularLocation>
</comment>
<comment type="alternative products">
    <event type="alternative splicing"/>
    <isoform>
        <id>Q9VA37-1</id>
        <name>1</name>
        <sequence type="displayed"/>
    </isoform>
    <isoform>
        <id>Q9VA37-2</id>
        <name>2</name>
        <sequence type="described" ref="VSP_058800"/>
    </isoform>
</comment>
<comment type="tissue specificity">
    <text evidence="2 3">Expressed in the head and testis (at protein level) (PubMed:16139213). Ubiquitously expressed at constant levels (PubMed:16139214).</text>
</comment>
<comment type="developmental stage">
    <text evidence="2 3 4">Detected during embryogenesis (at protein level) (PubMed:16139213). Maternally contributed, after which its levels fall slightly in embryo but increase again through development and in adult (PubMed:16139214, PubMed:16203113).</text>
</comment>
<comment type="PTM">
    <text evidence="5 7">Oxidation of Cys-45 and Cys-104 in response to oxidative stress (PubMed:16894167, PubMed:22515803). Levels of oxidation increase with age (PubMed:16894167).</text>
</comment>
<comment type="disruption phenotype">
    <text evidence="2 3 4 6 8 9 10">Viable and fertile (PubMed:16203113). Larvae develop normally but show increased oxidative stress-induced cell death (PubMed:23593018, PubMed:30540251). Larvae show structurally normal neuromuscular junctions, however they fail to show structural synaptic plasticity in response to oxygen species (ROS) levels (PubMed:30540251). Adult flies show severe defects in locomotor ability without loss of dopaminergic neurons and increased sensitivity to oxidative stress (PubMed:16139214, PubMed:16203113, PubMed:23593018). Results in altered subcellular localization of Daxx (PubMed:23593018). Does not show more elevated levels of methylglyoxal adducts than controls (PubMed:27903648). Double knockouts for dj-1beta and dj-1alpha is viable but with reduced male fertility (PubMed:16139213, PubMed:20457924). Double knockouts for dj-1beta and dj-1alpha is more sensitive to chemical agents that induce oxidative stress (PubMed:16139213). Double knockouts for dj-1beta and dj-1alpha shows reduced lifespan and decreased spontaneous movement over time (PubMed:20457924). Double knockouts for dj-1beta and dj-1alpha spermatozoa are morphologically normal but immotile with abnormal vacuoles in the Nebenkern, abnormal mitochondria and aberrant separation of investment cones during sperm individualization (PubMed:20457924). Double knockouts for DJ-1beta and Daxx restore normal number of dopaminergic neurons, locomotor activity and sensitivity to oxidative stress and UV-induced damage (PubMed:23593018).</text>
</comment>